<name>FTSH4_SYNY3</name>
<feature type="chain" id="PRO_0000084654" description="ATP-dependent zinc metalloprotease FtsH 4">
    <location>
        <begin position="1"/>
        <end position="628"/>
    </location>
</feature>
<feature type="topological domain" description="Cytoplasmic" evidence="1">
    <location>
        <begin position="1"/>
        <end position="14"/>
    </location>
</feature>
<feature type="transmembrane region" description="Helical" evidence="1">
    <location>
        <begin position="15"/>
        <end position="35"/>
    </location>
</feature>
<feature type="topological domain" description="Lumenal" evidence="1">
    <location>
        <begin position="36"/>
        <end position="119"/>
    </location>
</feature>
<feature type="transmembrane region" description="Helical" evidence="1">
    <location>
        <begin position="120"/>
        <end position="140"/>
    </location>
</feature>
<feature type="topological domain" description="Cytoplasmic" evidence="1">
    <location>
        <begin position="141"/>
        <end position="628"/>
    </location>
</feature>
<feature type="active site" evidence="1">
    <location>
        <position position="439"/>
    </location>
</feature>
<feature type="binding site" evidence="1">
    <location>
        <begin position="214"/>
        <end position="221"/>
    </location>
    <ligand>
        <name>ATP</name>
        <dbReference type="ChEBI" id="CHEBI:30616"/>
    </ligand>
</feature>
<feature type="binding site" evidence="1">
    <location>
        <position position="438"/>
    </location>
    <ligand>
        <name>Zn(2+)</name>
        <dbReference type="ChEBI" id="CHEBI:29105"/>
        <note>catalytic</note>
    </ligand>
</feature>
<feature type="binding site" evidence="1">
    <location>
        <position position="442"/>
    </location>
    <ligand>
        <name>Zn(2+)</name>
        <dbReference type="ChEBI" id="CHEBI:29105"/>
        <note>catalytic</note>
    </ligand>
</feature>
<feature type="binding site" evidence="1">
    <location>
        <position position="515"/>
    </location>
    <ligand>
        <name>Zn(2+)</name>
        <dbReference type="ChEBI" id="CHEBI:29105"/>
        <note>catalytic</note>
    </ligand>
</feature>
<evidence type="ECO:0000255" key="1">
    <source>
        <dbReference type="HAMAP-Rule" id="MF_01458"/>
    </source>
</evidence>
<evidence type="ECO:0000269" key="2">
    <source>
    </source>
</evidence>
<evidence type="ECO:0000269" key="3">
    <source>
    </source>
</evidence>
<sequence>MAIKPQPQWQRRLASVLLWGSTIYLLVNLLAPALFRSQPPQVPYSLFIDQVEGDKVASVYVGQNEIRYQLKPEAEDEGKEKAAEGQILRTTPIFDLELPKRLEAKGIEFAAAPPAKNSWFGTLLSWVIPPLIFVGIWSFFLNRNNNGAPGGALAFTKSKAKVYVEGDSTKVTFDDVAGVEEAKTELSEVVDFLKFPQRYTALGAKIPKGVLLVGPPGTGKTLLAKAAAGEAGVPFFIISGSEFVELFVGAGAARVRDLFEQAKKQAPCIVFIDELDAIGKSRASGAFMGGNDEREQTLNQLLTEMDGFSAAGATVIVLAATNRPETLDPALLRPGRFDRQVLVDRPDLAGRLKILEIYAKKIKLDKEVELKNIATRTPGFAGADLANLVNEAALLAARNKQDSVTEADFREAIERVVAGLEKKSRVLSDKEKKIVAYHEVGHALVGAVMPGGGQVAKISIVPRGMAALGYTLQMPTEDRFLLNESELRDQIATLLGGRAAEEIVFDSITTGAANDLQRATDLAEQMVTTYGMSKVLGPLAYDKGQQNNFLGQGMGNPRRMVSDDTAKEIDLEVKEIVEQGHNQALAILEHNRDLLEAIAEKILEKEVIEGEELHHLLGQVQAPGTLVV</sequence>
<reference key="1">
    <citation type="journal article" date="1996" name="DNA Res.">
        <title>Sequence analysis of the genome of the unicellular cyanobacterium Synechocystis sp. strain PCC6803. II. Sequence determination of the entire genome and assignment of potential protein-coding regions.</title>
        <authorList>
            <person name="Kaneko T."/>
            <person name="Sato S."/>
            <person name="Kotani H."/>
            <person name="Tanaka A."/>
            <person name="Asamizu E."/>
            <person name="Nakamura Y."/>
            <person name="Miyajima N."/>
            <person name="Hirosawa M."/>
            <person name="Sugiura M."/>
            <person name="Sasamoto S."/>
            <person name="Kimura T."/>
            <person name="Hosouchi T."/>
            <person name="Matsuno A."/>
            <person name="Muraki A."/>
            <person name="Nakazaki N."/>
            <person name="Naruo K."/>
            <person name="Okumura S."/>
            <person name="Shimpo S."/>
            <person name="Takeuchi C."/>
            <person name="Wada T."/>
            <person name="Watanabe A."/>
            <person name="Yamada M."/>
            <person name="Yasuda M."/>
            <person name="Tabata S."/>
        </authorList>
    </citation>
    <scope>NUCLEOTIDE SEQUENCE [LARGE SCALE GENOMIC DNA]</scope>
    <source>
        <strain>ATCC 27184 / PCC 6803 / Kazusa</strain>
    </source>
</reference>
<reference key="2">
    <citation type="journal article" date="2000" name="FEBS Lett.">
        <title>Involvement of an FtsH homologue in the assembly of functional photosystem I in the cyanobacterium Synechocystis sp. PCC 6803.</title>
        <authorList>
            <person name="Mann N.H."/>
            <person name="Novac N."/>
            <person name="Mullineaux C.W."/>
            <person name="Newman J."/>
            <person name="Bailey S."/>
            <person name="Robinson C."/>
        </authorList>
    </citation>
    <scope>DISRUPTION PHENOTYPE</scope>
</reference>
<reference key="3">
    <citation type="journal article" date="2007" name="Biochim. Biophys. Acta">
        <title>The role of the FtsH and Deg proteases in the repair of UV-B radiation-damaged Photosystem II in the cyanobacterium Synechocystis PCC 6803.</title>
        <authorList>
            <person name="Cheregi O."/>
            <person name="Sicora C."/>
            <person name="Kos P.B."/>
            <person name="Barker M."/>
            <person name="Nixon P.J."/>
            <person name="Vass I."/>
        </authorList>
    </citation>
    <scope>INDUCTION</scope>
</reference>
<comment type="function">
    <text evidence="1">Acts as a processive, ATP-dependent zinc metallopeptidase for both cytoplasmic and membrane proteins. Plays a role in the quality control of integral membrane proteins.</text>
</comment>
<comment type="cofactor">
    <cofactor evidence="1">
        <name>Zn(2+)</name>
        <dbReference type="ChEBI" id="CHEBI:29105"/>
    </cofactor>
    <text evidence="1">Binds 1 zinc ion per subunit.</text>
</comment>
<comment type="subunit">
    <text evidence="1">Homohexamer.</text>
</comment>
<comment type="subcellular location">
    <subcellularLocation>
        <location evidence="1">Cellular thylakoid membrane</location>
        <topology evidence="1">Multi-pass membrane protein</topology>
        <orientation evidence="1">Stromal side</orientation>
    </subcellularLocation>
</comment>
<comment type="induction">
    <text evidence="3">Slight induction by UV-B light.</text>
</comment>
<comment type="disruption phenotype">
    <text evidence="2">No visible phenotype.</text>
</comment>
<comment type="similarity">
    <text evidence="1">In the central section; belongs to the AAA ATPase family.</text>
</comment>
<comment type="similarity">
    <text evidence="1">In the C-terminal section; belongs to the peptidase M41 family.</text>
</comment>
<organism>
    <name type="scientific">Synechocystis sp. (strain ATCC 27184 / PCC 6803 / Kazusa)</name>
    <dbReference type="NCBI Taxonomy" id="1111708"/>
    <lineage>
        <taxon>Bacteria</taxon>
        <taxon>Bacillati</taxon>
        <taxon>Cyanobacteriota</taxon>
        <taxon>Cyanophyceae</taxon>
        <taxon>Synechococcales</taxon>
        <taxon>Merismopediaceae</taxon>
        <taxon>Synechocystis</taxon>
    </lineage>
</organism>
<protein>
    <recommendedName>
        <fullName evidence="1">ATP-dependent zinc metalloprotease FtsH 4</fullName>
        <ecNumber evidence="1">3.4.24.-</ecNumber>
    </recommendedName>
</protein>
<proteinExistence type="evidence at transcript level"/>
<accession>P73437</accession>
<dbReference type="EC" id="3.4.24.-" evidence="1"/>
<dbReference type="EMBL" id="BA000022">
    <property type="protein sequence ID" value="BAA17477.1"/>
    <property type="molecule type" value="Genomic_DNA"/>
</dbReference>
<dbReference type="PIR" id="S77374">
    <property type="entry name" value="S77374"/>
</dbReference>
<dbReference type="SMR" id="P73437"/>
<dbReference type="IntAct" id="P73437">
    <property type="interactions" value="5"/>
</dbReference>
<dbReference type="STRING" id="1148.gene:10498342"/>
<dbReference type="MEROPS" id="M41.021"/>
<dbReference type="PaxDb" id="1148-1652556"/>
<dbReference type="EnsemblBacteria" id="BAA17477">
    <property type="protein sequence ID" value="BAA17477"/>
    <property type="gene ID" value="BAA17477"/>
</dbReference>
<dbReference type="KEGG" id="syn:sll1463"/>
<dbReference type="eggNOG" id="COG0465">
    <property type="taxonomic scope" value="Bacteria"/>
</dbReference>
<dbReference type="InParanoid" id="P73437"/>
<dbReference type="PhylomeDB" id="P73437"/>
<dbReference type="BRENDA" id="3.4.24.B20">
    <property type="organism ID" value="382"/>
</dbReference>
<dbReference type="Proteomes" id="UP000001425">
    <property type="component" value="Chromosome"/>
</dbReference>
<dbReference type="GO" id="GO:0031676">
    <property type="term" value="C:plasma membrane-derived thylakoid membrane"/>
    <property type="evidence" value="ECO:0007669"/>
    <property type="project" value="UniProtKB-SubCell"/>
</dbReference>
<dbReference type="GO" id="GO:0005524">
    <property type="term" value="F:ATP binding"/>
    <property type="evidence" value="ECO:0007669"/>
    <property type="project" value="UniProtKB-UniRule"/>
</dbReference>
<dbReference type="GO" id="GO:0016887">
    <property type="term" value="F:ATP hydrolysis activity"/>
    <property type="evidence" value="ECO:0007669"/>
    <property type="project" value="UniProtKB-UniRule"/>
</dbReference>
<dbReference type="GO" id="GO:0004176">
    <property type="term" value="F:ATP-dependent peptidase activity"/>
    <property type="evidence" value="ECO:0000318"/>
    <property type="project" value="GO_Central"/>
</dbReference>
<dbReference type="GO" id="GO:0004222">
    <property type="term" value="F:metalloendopeptidase activity"/>
    <property type="evidence" value="ECO:0007669"/>
    <property type="project" value="InterPro"/>
</dbReference>
<dbReference type="GO" id="GO:0008270">
    <property type="term" value="F:zinc ion binding"/>
    <property type="evidence" value="ECO:0007669"/>
    <property type="project" value="UniProtKB-UniRule"/>
</dbReference>
<dbReference type="GO" id="GO:0030163">
    <property type="term" value="P:protein catabolic process"/>
    <property type="evidence" value="ECO:0007669"/>
    <property type="project" value="UniProtKB-UniRule"/>
</dbReference>
<dbReference type="GO" id="GO:0006508">
    <property type="term" value="P:proteolysis"/>
    <property type="evidence" value="ECO:0000318"/>
    <property type="project" value="GO_Central"/>
</dbReference>
<dbReference type="CDD" id="cd19501">
    <property type="entry name" value="RecA-like_FtsH"/>
    <property type="match status" value="1"/>
</dbReference>
<dbReference type="FunFam" id="1.10.8.60:FF:000001">
    <property type="entry name" value="ATP-dependent zinc metalloprotease FtsH"/>
    <property type="match status" value="1"/>
</dbReference>
<dbReference type="FunFam" id="1.20.58.760:FF:000001">
    <property type="entry name" value="ATP-dependent zinc metalloprotease FtsH"/>
    <property type="match status" value="1"/>
</dbReference>
<dbReference type="FunFam" id="3.40.50.300:FF:000001">
    <property type="entry name" value="ATP-dependent zinc metalloprotease FtsH"/>
    <property type="match status" value="1"/>
</dbReference>
<dbReference type="Gene3D" id="1.10.8.60">
    <property type="match status" value="1"/>
</dbReference>
<dbReference type="Gene3D" id="3.30.720.210">
    <property type="match status" value="1"/>
</dbReference>
<dbReference type="Gene3D" id="3.40.50.300">
    <property type="entry name" value="P-loop containing nucleotide triphosphate hydrolases"/>
    <property type="match status" value="1"/>
</dbReference>
<dbReference type="Gene3D" id="1.20.58.760">
    <property type="entry name" value="Peptidase M41"/>
    <property type="match status" value="1"/>
</dbReference>
<dbReference type="HAMAP" id="MF_01458">
    <property type="entry name" value="FtsH"/>
    <property type="match status" value="1"/>
</dbReference>
<dbReference type="InterPro" id="IPR003593">
    <property type="entry name" value="AAA+_ATPase"/>
</dbReference>
<dbReference type="InterPro" id="IPR041569">
    <property type="entry name" value="AAA_lid_3"/>
</dbReference>
<dbReference type="InterPro" id="IPR003959">
    <property type="entry name" value="ATPase_AAA_core"/>
</dbReference>
<dbReference type="InterPro" id="IPR003960">
    <property type="entry name" value="ATPase_AAA_CS"/>
</dbReference>
<dbReference type="InterPro" id="IPR005936">
    <property type="entry name" value="FtsH"/>
</dbReference>
<dbReference type="InterPro" id="IPR027417">
    <property type="entry name" value="P-loop_NTPase"/>
</dbReference>
<dbReference type="InterPro" id="IPR011546">
    <property type="entry name" value="Pept_M41_FtsH_extracell"/>
</dbReference>
<dbReference type="InterPro" id="IPR000642">
    <property type="entry name" value="Peptidase_M41"/>
</dbReference>
<dbReference type="InterPro" id="IPR037219">
    <property type="entry name" value="Peptidase_M41-like"/>
</dbReference>
<dbReference type="NCBIfam" id="TIGR01241">
    <property type="entry name" value="FtsH_fam"/>
    <property type="match status" value="1"/>
</dbReference>
<dbReference type="PANTHER" id="PTHR23076:SF113">
    <property type="entry name" value="ATP-DEPENDENT ZINC METALLOPROTEASE FTSH 1, CHLOROPLASTIC-RELATED"/>
    <property type="match status" value="1"/>
</dbReference>
<dbReference type="PANTHER" id="PTHR23076">
    <property type="entry name" value="METALLOPROTEASE M41 FTSH"/>
    <property type="match status" value="1"/>
</dbReference>
<dbReference type="Pfam" id="PF00004">
    <property type="entry name" value="AAA"/>
    <property type="match status" value="1"/>
</dbReference>
<dbReference type="Pfam" id="PF17862">
    <property type="entry name" value="AAA_lid_3"/>
    <property type="match status" value="1"/>
</dbReference>
<dbReference type="Pfam" id="PF06480">
    <property type="entry name" value="FtsH_ext"/>
    <property type="match status" value="1"/>
</dbReference>
<dbReference type="Pfam" id="PF01434">
    <property type="entry name" value="Peptidase_M41"/>
    <property type="match status" value="1"/>
</dbReference>
<dbReference type="SMART" id="SM00382">
    <property type="entry name" value="AAA"/>
    <property type="match status" value="1"/>
</dbReference>
<dbReference type="SUPFAM" id="SSF140990">
    <property type="entry name" value="FtsH protease domain-like"/>
    <property type="match status" value="1"/>
</dbReference>
<dbReference type="SUPFAM" id="SSF52540">
    <property type="entry name" value="P-loop containing nucleoside triphosphate hydrolases"/>
    <property type="match status" value="1"/>
</dbReference>
<dbReference type="PROSITE" id="PS00674">
    <property type="entry name" value="AAA"/>
    <property type="match status" value="1"/>
</dbReference>
<keyword id="KW-0067">ATP-binding</keyword>
<keyword id="KW-0378">Hydrolase</keyword>
<keyword id="KW-0472">Membrane</keyword>
<keyword id="KW-0479">Metal-binding</keyword>
<keyword id="KW-0482">Metalloprotease</keyword>
<keyword id="KW-0547">Nucleotide-binding</keyword>
<keyword id="KW-0645">Protease</keyword>
<keyword id="KW-1185">Reference proteome</keyword>
<keyword id="KW-0793">Thylakoid</keyword>
<keyword id="KW-0812">Transmembrane</keyword>
<keyword id="KW-1133">Transmembrane helix</keyword>
<keyword id="KW-0862">Zinc</keyword>
<gene>
    <name evidence="1" type="primary">ftsH4</name>
    <name type="ordered locus">sll1463</name>
</gene>